<sequence length="267" mass="28471">MLLAIDVRNTHTTVGLISGSGDHAKVVQQWRIRTESEATADELALTIDGLIGEDSERLTGAVGLSTVPSVLHEVRLMLEQYWPSVPHVMIEPGVRTGIPLLVDNPKEVGADRIVNCLAAYHRFGTAAIVVDFGSSICVDVVSAKGEFLGGAIAPGVQVSSDAAAARSAALRRVELTRPRSVIGKNTVECMQSGALFGFAGLVDGLVNRIREDVAGFSGTDVAVVATGHTAPLVLPDVHTVAHYDRHLTLDGLRLVFERNRDGQRGRR</sequence>
<organism>
    <name type="scientific">Mycobacterium sp. (strain KMS)</name>
    <dbReference type="NCBI Taxonomy" id="189918"/>
    <lineage>
        <taxon>Bacteria</taxon>
        <taxon>Bacillati</taxon>
        <taxon>Actinomycetota</taxon>
        <taxon>Actinomycetes</taxon>
        <taxon>Mycobacteriales</taxon>
        <taxon>Mycobacteriaceae</taxon>
        <taxon>Mycobacterium</taxon>
    </lineage>
</organism>
<gene>
    <name evidence="1" type="primary">coaX</name>
    <name type="ordered locus">Mkms_4846</name>
</gene>
<reference key="1">
    <citation type="submission" date="2006-12" db="EMBL/GenBank/DDBJ databases">
        <title>Complete sequence of chromosome of Mycobacterium sp. KMS.</title>
        <authorList>
            <consortium name="US DOE Joint Genome Institute"/>
            <person name="Copeland A."/>
            <person name="Lucas S."/>
            <person name="Lapidus A."/>
            <person name="Barry K."/>
            <person name="Detter J.C."/>
            <person name="Glavina del Rio T."/>
            <person name="Hammon N."/>
            <person name="Israni S."/>
            <person name="Dalin E."/>
            <person name="Tice H."/>
            <person name="Pitluck S."/>
            <person name="Kiss H."/>
            <person name="Brettin T."/>
            <person name="Bruce D."/>
            <person name="Han C."/>
            <person name="Tapia R."/>
            <person name="Gilna P."/>
            <person name="Schmutz J."/>
            <person name="Larimer F."/>
            <person name="Land M."/>
            <person name="Hauser L."/>
            <person name="Kyrpides N."/>
            <person name="Mikhailova N."/>
            <person name="Miller C.D."/>
            <person name="Richardson P."/>
        </authorList>
    </citation>
    <scope>NUCLEOTIDE SEQUENCE [LARGE SCALE GENOMIC DNA]</scope>
    <source>
        <strain>KMS</strain>
    </source>
</reference>
<evidence type="ECO:0000255" key="1">
    <source>
        <dbReference type="HAMAP-Rule" id="MF_01274"/>
    </source>
</evidence>
<protein>
    <recommendedName>
        <fullName evidence="1">Type III pantothenate kinase</fullName>
        <ecNumber evidence="1">2.7.1.33</ecNumber>
    </recommendedName>
    <alternativeName>
        <fullName evidence="1">PanK-III</fullName>
    </alternativeName>
    <alternativeName>
        <fullName evidence="1">Pantothenic acid kinase</fullName>
    </alternativeName>
</protein>
<comment type="function">
    <text evidence="1">Catalyzes the phosphorylation of pantothenate (Pan), the first step in CoA biosynthesis.</text>
</comment>
<comment type="catalytic activity">
    <reaction evidence="1">
        <text>(R)-pantothenate + ATP = (R)-4'-phosphopantothenate + ADP + H(+)</text>
        <dbReference type="Rhea" id="RHEA:16373"/>
        <dbReference type="ChEBI" id="CHEBI:10986"/>
        <dbReference type="ChEBI" id="CHEBI:15378"/>
        <dbReference type="ChEBI" id="CHEBI:29032"/>
        <dbReference type="ChEBI" id="CHEBI:30616"/>
        <dbReference type="ChEBI" id="CHEBI:456216"/>
        <dbReference type="EC" id="2.7.1.33"/>
    </reaction>
</comment>
<comment type="cofactor">
    <cofactor evidence="1">
        <name>NH4(+)</name>
        <dbReference type="ChEBI" id="CHEBI:28938"/>
    </cofactor>
    <cofactor evidence="1">
        <name>K(+)</name>
        <dbReference type="ChEBI" id="CHEBI:29103"/>
    </cofactor>
    <text evidence="1">A monovalent cation. Ammonium or potassium.</text>
</comment>
<comment type="pathway">
    <text evidence="1">Cofactor biosynthesis; coenzyme A biosynthesis; CoA from (R)-pantothenate: step 1/5.</text>
</comment>
<comment type="subunit">
    <text evidence="1">Homodimer.</text>
</comment>
<comment type="subcellular location">
    <subcellularLocation>
        <location evidence="1">Cytoplasm</location>
    </subcellularLocation>
</comment>
<comment type="similarity">
    <text evidence="1">Belongs to the type III pantothenate kinase family.</text>
</comment>
<accession>A1UMH8</accession>
<proteinExistence type="inferred from homology"/>
<dbReference type="EC" id="2.7.1.33" evidence="1"/>
<dbReference type="EMBL" id="CP000518">
    <property type="protein sequence ID" value="ABL94036.1"/>
    <property type="molecule type" value="Genomic_DNA"/>
</dbReference>
<dbReference type="SMR" id="A1UMH8"/>
<dbReference type="STRING" id="189918.Mkms_4846"/>
<dbReference type="KEGG" id="mkm:Mkms_4846"/>
<dbReference type="HOGENOM" id="CLU_066627_1_0_11"/>
<dbReference type="OrthoDB" id="9804707at2"/>
<dbReference type="UniPathway" id="UPA00241">
    <property type="reaction ID" value="UER00352"/>
</dbReference>
<dbReference type="GO" id="GO:0005737">
    <property type="term" value="C:cytoplasm"/>
    <property type="evidence" value="ECO:0007669"/>
    <property type="project" value="UniProtKB-SubCell"/>
</dbReference>
<dbReference type="GO" id="GO:0005524">
    <property type="term" value="F:ATP binding"/>
    <property type="evidence" value="ECO:0007669"/>
    <property type="project" value="UniProtKB-UniRule"/>
</dbReference>
<dbReference type="GO" id="GO:0046872">
    <property type="term" value="F:metal ion binding"/>
    <property type="evidence" value="ECO:0007669"/>
    <property type="project" value="UniProtKB-KW"/>
</dbReference>
<dbReference type="GO" id="GO:0004594">
    <property type="term" value="F:pantothenate kinase activity"/>
    <property type="evidence" value="ECO:0007669"/>
    <property type="project" value="UniProtKB-UniRule"/>
</dbReference>
<dbReference type="GO" id="GO:0015937">
    <property type="term" value="P:coenzyme A biosynthetic process"/>
    <property type="evidence" value="ECO:0007669"/>
    <property type="project" value="UniProtKB-UniRule"/>
</dbReference>
<dbReference type="CDD" id="cd24015">
    <property type="entry name" value="ASKHA_NBD_PanK-III"/>
    <property type="match status" value="1"/>
</dbReference>
<dbReference type="Gene3D" id="3.30.420.40">
    <property type="match status" value="2"/>
</dbReference>
<dbReference type="HAMAP" id="MF_01274">
    <property type="entry name" value="Pantothen_kinase_3"/>
    <property type="match status" value="1"/>
</dbReference>
<dbReference type="InterPro" id="IPR043129">
    <property type="entry name" value="ATPase_NBD"/>
</dbReference>
<dbReference type="InterPro" id="IPR004619">
    <property type="entry name" value="Type_III_PanK"/>
</dbReference>
<dbReference type="NCBIfam" id="TIGR00671">
    <property type="entry name" value="baf"/>
    <property type="match status" value="1"/>
</dbReference>
<dbReference type="NCBIfam" id="NF009845">
    <property type="entry name" value="PRK13318.1-3"/>
    <property type="match status" value="1"/>
</dbReference>
<dbReference type="PANTHER" id="PTHR34265">
    <property type="entry name" value="TYPE III PANTOTHENATE KINASE"/>
    <property type="match status" value="1"/>
</dbReference>
<dbReference type="PANTHER" id="PTHR34265:SF1">
    <property type="entry name" value="TYPE III PANTOTHENATE KINASE"/>
    <property type="match status" value="1"/>
</dbReference>
<dbReference type="Pfam" id="PF03309">
    <property type="entry name" value="Pan_kinase"/>
    <property type="match status" value="1"/>
</dbReference>
<dbReference type="SUPFAM" id="SSF53067">
    <property type="entry name" value="Actin-like ATPase domain"/>
    <property type="match status" value="2"/>
</dbReference>
<name>COAX_MYCSK</name>
<feature type="chain" id="PRO_1000054393" description="Type III pantothenate kinase">
    <location>
        <begin position="1"/>
        <end position="267"/>
    </location>
</feature>
<feature type="active site" description="Proton acceptor" evidence="1">
    <location>
        <position position="111"/>
    </location>
</feature>
<feature type="binding site" evidence="1">
    <location>
        <begin position="6"/>
        <end position="13"/>
    </location>
    <ligand>
        <name>ATP</name>
        <dbReference type="ChEBI" id="CHEBI:30616"/>
    </ligand>
</feature>
<feature type="binding site" evidence="1">
    <location>
        <begin position="109"/>
        <end position="112"/>
    </location>
    <ligand>
        <name>substrate</name>
    </ligand>
</feature>
<feature type="binding site" evidence="1">
    <location>
        <position position="131"/>
    </location>
    <ligand>
        <name>K(+)</name>
        <dbReference type="ChEBI" id="CHEBI:29103"/>
    </ligand>
</feature>
<feature type="binding site" evidence="1">
    <location>
        <position position="134"/>
    </location>
    <ligand>
        <name>ATP</name>
        <dbReference type="ChEBI" id="CHEBI:30616"/>
    </ligand>
</feature>
<feature type="binding site" evidence="1">
    <location>
        <position position="186"/>
    </location>
    <ligand>
        <name>substrate</name>
    </ligand>
</feature>
<keyword id="KW-0067">ATP-binding</keyword>
<keyword id="KW-0173">Coenzyme A biosynthesis</keyword>
<keyword id="KW-0963">Cytoplasm</keyword>
<keyword id="KW-0418">Kinase</keyword>
<keyword id="KW-0479">Metal-binding</keyword>
<keyword id="KW-0547">Nucleotide-binding</keyword>
<keyword id="KW-0630">Potassium</keyword>
<keyword id="KW-0808">Transferase</keyword>